<comment type="function">
    <text>This protein is involved in the initial step of iron uptake by binding ferrienterobactin (Fe-ENT), an iron chelatin siderophore that allows E.coli to extract iron from the environment. FepA also acts as a receptor for colicins B and D.</text>
</comment>
<comment type="interaction">
    <interactant intactId="EBI-6400027">
        <id>P05825</id>
    </interactant>
    <interactant intactId="EBI-6399993">
        <id>P02929</id>
        <label>tonB</label>
    </interactant>
    <organismsDiffer>false</organismsDiffer>
    <experiments>2</experiments>
</comment>
<comment type="subcellular location">
    <subcellularLocation>
        <location evidence="1">Cell outer membrane</location>
        <topology evidence="1">Multi-pass membrane protein</topology>
    </subcellularLocation>
</comment>
<comment type="induction">
    <text evidence="3">Induced 1.9-fold by hydroxyurea.</text>
</comment>
<comment type="similarity">
    <text evidence="4">Belongs to the TonB-dependent receptor family.</text>
</comment>
<comment type="sequence caution" evidence="4">
    <conflict type="erroneous initiation">
        <sequence resource="EMBL-CDS" id="AAB40783"/>
    </conflict>
    <text>Extended N-terminus.</text>
</comment>
<feature type="signal peptide">
    <location>
        <begin position="1"/>
        <end position="22"/>
    </location>
</feature>
<feature type="chain" id="PRO_0000034747" description="Ferrienterobactin receptor">
    <location>
        <begin position="23"/>
        <end position="746"/>
    </location>
</feature>
<feature type="domain" description="TBDR plug" evidence="1">
    <location>
        <begin position="42"/>
        <end position="169"/>
    </location>
</feature>
<feature type="domain" description="TBDR beta-barrel" evidence="1">
    <location>
        <begin position="174"/>
        <end position="746"/>
    </location>
</feature>
<feature type="region of interest" description="Disordered" evidence="2">
    <location>
        <begin position="76"/>
        <end position="96"/>
    </location>
</feature>
<feature type="short sequence motif" description="TonB box">
    <location>
        <begin position="34"/>
        <end position="41"/>
    </location>
</feature>
<feature type="short sequence motif" description="TonB C-terminal box">
    <location>
        <begin position="729"/>
        <end position="746"/>
    </location>
</feature>
<feature type="compositionally biased region" description="Polar residues" evidence="2">
    <location>
        <begin position="79"/>
        <end position="93"/>
    </location>
</feature>
<feature type="sequence conflict" description="In Ref. 1; AAA65994." evidence="4" ref="1">
    <original>A</original>
    <variation>R</variation>
    <location>
        <position position="152"/>
    </location>
</feature>
<feature type="sequence conflict" description="In Ref. 1; AAA65994." evidence="4" ref="1">
    <location>
        <position position="403"/>
    </location>
</feature>
<feature type="helix" evidence="5">
    <location>
        <begin position="40"/>
        <end position="44"/>
    </location>
</feature>
<feature type="strand" evidence="5">
    <location>
        <begin position="50"/>
        <end position="54"/>
    </location>
</feature>
<feature type="helix" evidence="5">
    <location>
        <begin position="55"/>
        <end position="60"/>
    </location>
</feature>
<feature type="helix" evidence="5">
    <location>
        <begin position="68"/>
        <end position="71"/>
    </location>
</feature>
<feature type="strand" evidence="5">
    <location>
        <begin position="77"/>
        <end position="82"/>
    </location>
</feature>
<feature type="turn" evidence="5">
    <location>
        <begin position="87"/>
        <end position="90"/>
    </location>
</feature>
<feature type="strand" evidence="5">
    <location>
        <begin position="92"/>
        <end position="96"/>
    </location>
</feature>
<feature type="helix" evidence="5">
    <location>
        <begin position="101"/>
        <end position="103"/>
    </location>
</feature>
<feature type="strand" evidence="5">
    <location>
        <begin position="104"/>
        <end position="108"/>
    </location>
</feature>
<feature type="helix" evidence="5">
    <location>
        <begin position="115"/>
        <end position="118"/>
    </location>
</feature>
<feature type="helix" evidence="5">
    <location>
        <begin position="138"/>
        <end position="140"/>
    </location>
</feature>
<feature type="strand" evidence="5">
    <location>
        <begin position="141"/>
        <end position="148"/>
    </location>
</feature>
<feature type="helix" evidence="5">
    <location>
        <begin position="150"/>
        <end position="153"/>
    </location>
</feature>
<feature type="strand" evidence="5">
    <location>
        <begin position="160"/>
        <end position="168"/>
    </location>
</feature>
<feature type="strand" evidence="5">
    <location>
        <begin position="176"/>
        <end position="188"/>
    </location>
</feature>
<feature type="strand" evidence="5">
    <location>
        <begin position="194"/>
        <end position="204"/>
    </location>
</feature>
<feature type="strand" evidence="5">
    <location>
        <begin position="206"/>
        <end position="220"/>
    </location>
</feature>
<feature type="turn" evidence="5">
    <location>
        <begin position="225"/>
        <end position="231"/>
    </location>
</feature>
<feature type="helix" evidence="5">
    <location>
        <begin position="237"/>
        <end position="239"/>
    </location>
</feature>
<feature type="strand" evidence="5">
    <location>
        <begin position="249"/>
        <end position="264"/>
    </location>
</feature>
<feature type="strand" evidence="5">
    <location>
        <begin position="267"/>
        <end position="281"/>
    </location>
</feature>
<feature type="helix" evidence="5">
    <location>
        <begin position="294"/>
        <end position="298"/>
    </location>
</feature>
<feature type="strand" evidence="5">
    <location>
        <begin position="304"/>
        <end position="318"/>
    </location>
</feature>
<feature type="strand" evidence="5">
    <location>
        <begin position="324"/>
        <end position="338"/>
    </location>
</feature>
<feature type="strand" evidence="5">
    <location>
        <begin position="360"/>
        <end position="397"/>
    </location>
</feature>
<feature type="strand" evidence="5">
    <location>
        <begin position="426"/>
        <end position="441"/>
    </location>
</feature>
<feature type="strand" evidence="5">
    <location>
        <begin position="443"/>
        <end position="457"/>
    </location>
</feature>
<feature type="turn" evidence="5">
    <location>
        <begin position="458"/>
        <end position="460"/>
    </location>
</feature>
<feature type="strand" evidence="5">
    <location>
        <begin position="461"/>
        <end position="473"/>
    </location>
</feature>
<feature type="strand" evidence="5">
    <location>
        <begin position="478"/>
        <end position="489"/>
    </location>
</feature>
<feature type="turn" evidence="5">
    <location>
        <begin position="493"/>
        <end position="496"/>
    </location>
</feature>
<feature type="strand" evidence="5">
    <location>
        <begin position="501"/>
        <end position="503"/>
    </location>
</feature>
<feature type="strand" evidence="5">
    <location>
        <begin position="517"/>
        <end position="519"/>
    </location>
</feature>
<feature type="strand" evidence="5">
    <location>
        <begin position="527"/>
        <end position="540"/>
    </location>
</feature>
<feature type="strand" evidence="5">
    <location>
        <begin position="543"/>
        <end position="560"/>
    </location>
</feature>
<feature type="strand" evidence="5">
    <location>
        <begin position="573"/>
        <end position="597"/>
    </location>
</feature>
<feature type="strand" evidence="5">
    <location>
        <begin position="600"/>
        <end position="614"/>
    </location>
</feature>
<feature type="turn" evidence="5">
    <location>
        <begin position="615"/>
        <end position="617"/>
    </location>
</feature>
<feature type="strand" evidence="5">
    <location>
        <begin position="626"/>
        <end position="638"/>
    </location>
</feature>
<feature type="strand" evidence="5">
    <location>
        <begin position="641"/>
        <end position="650"/>
    </location>
</feature>
<feature type="helix" evidence="5">
    <location>
        <begin position="667"/>
        <end position="670"/>
    </location>
</feature>
<feature type="strand" evidence="5">
    <location>
        <begin position="676"/>
        <end position="686"/>
    </location>
</feature>
<feature type="strand" evidence="5">
    <location>
        <begin position="688"/>
        <end position="699"/>
    </location>
</feature>
<feature type="strand" evidence="5">
    <location>
        <begin position="719"/>
        <end position="723"/>
    </location>
</feature>
<feature type="strand" evidence="5">
    <location>
        <begin position="737"/>
        <end position="746"/>
    </location>
</feature>
<gene>
    <name type="primary">fepA</name>
    <name type="synonym">fep</name>
    <name type="synonym">feuB</name>
    <name type="ordered locus">b0584</name>
    <name type="ordered locus">JW5086</name>
</gene>
<sequence length="746" mass="82107">MNKKIHSLALLVNLGIYGVAQAQEPTDTPVSHDDTIVVTAAEQNLQAPGVSTITADEIRKNPVARDVSKIIRTMPGVNLTGNSTSGQRGNNRQIDIRGMGPENTLILIDGKPVSSRNSVRQGWRGERDTRGDTSWVPPEMIERIEVLRGPAAARYGNGAAGGVVNIITKKGSGEWHGSWDAYFNAPEHKEEGATKRTNFSLTGPLGDEFSFRLYGNLDKTQADAWDINQGHQSARAGTYATTLPAGREGVINKDINGVVRWDFAPLQSLELEAGYSRQGNLYAGDTQNTNSDSYTRSKYGDETNRLYRQNYALTWNGGWDNGVTTSNWVQYEHTRNSRIPEGLAGGTEGKFNEKATQDFVDIDLDDVMLHSEVNLPIDFLVNQTLTLGTEWNQQRMKDLSSNTQALTGTNTGGAIDGVSTTDRSPYSKAEIFSLFAENNMELTDSTIVTPGLRFDHHSIVGNNWSPALNISQGLGDDFTLKMGIARAYKAPSLYQTNPNYILYSKGQGCYASAGGCYLQGNDDLKAETSINKEIGLEFKRDGWLAGVTWFRNDYRNKIEAGYVAVGQNAVGTDLYQWDNVPKAVVEGLEGSLNVPVSETVMWTNNITYMLKSENKTTGDRLSIIPEYTLNSTLSWQAREDLSMQTTFTWYGKQQPKKYNYKGQPAVGPETKEISPYSIVGLSATWDVTKNVSLTGGVDNLFDKRLWRAGNAQTTGDLAGANYIAGAGAYTYNEPGRTWYMSVNTHF</sequence>
<proteinExistence type="evidence at protein level"/>
<dbReference type="EMBL" id="M13748">
    <property type="protein sequence ID" value="AAA65994.1"/>
    <property type="molecule type" value="Genomic_DNA"/>
</dbReference>
<dbReference type="EMBL" id="U82598">
    <property type="protein sequence ID" value="AAB40783.1"/>
    <property type="status" value="ALT_INIT"/>
    <property type="molecule type" value="Genomic_DNA"/>
</dbReference>
<dbReference type="EMBL" id="U00096">
    <property type="protein sequence ID" value="AAC73685.1"/>
    <property type="molecule type" value="Genomic_DNA"/>
</dbReference>
<dbReference type="EMBL" id="AP009048">
    <property type="protein sequence ID" value="BAA35225.1"/>
    <property type="molecule type" value="Genomic_DNA"/>
</dbReference>
<dbReference type="EMBL" id="J04216">
    <property type="protein sequence ID" value="AAA23756.1"/>
    <property type="molecule type" value="Genomic_DNA"/>
</dbReference>
<dbReference type="PIR" id="F64791">
    <property type="entry name" value="QRECFC"/>
</dbReference>
<dbReference type="RefSeq" id="NP_415116.1">
    <property type="nucleotide sequence ID" value="NC_000913.3"/>
</dbReference>
<dbReference type="RefSeq" id="WP_001034943.1">
    <property type="nucleotide sequence ID" value="NZ_LN832404.1"/>
</dbReference>
<dbReference type="PDB" id="1FEP">
    <property type="method" value="X-ray"/>
    <property type="resolution" value="2.40 A"/>
    <property type="chains" value="A=23-746"/>
</dbReference>
<dbReference type="PDBsum" id="1FEP"/>
<dbReference type="PCDDB" id="P05825"/>
<dbReference type="SMR" id="P05825"/>
<dbReference type="BioGRID" id="4263074">
    <property type="interactions" value="250"/>
</dbReference>
<dbReference type="ComplexPortal" id="CPX-3578">
    <property type="entry name" value="Ferric-enterobactin outer membrane transporter complex"/>
</dbReference>
<dbReference type="DIP" id="DIP-9592N"/>
<dbReference type="FunCoup" id="P05825">
    <property type="interactions" value="236"/>
</dbReference>
<dbReference type="IntAct" id="P05825">
    <property type="interactions" value="1"/>
</dbReference>
<dbReference type="STRING" id="511145.b0584"/>
<dbReference type="TCDB" id="1.B.14.1.22">
    <property type="family name" value="the outer membrane receptor (omr) family"/>
</dbReference>
<dbReference type="jPOST" id="P05825"/>
<dbReference type="PaxDb" id="511145-b0584"/>
<dbReference type="EnsemblBacteria" id="AAC73685">
    <property type="protein sequence ID" value="AAC73685"/>
    <property type="gene ID" value="b0584"/>
</dbReference>
<dbReference type="GeneID" id="945193"/>
<dbReference type="KEGG" id="ecj:JW5086"/>
<dbReference type="KEGG" id="eco:b0584"/>
<dbReference type="KEGG" id="ecoc:C3026_02910"/>
<dbReference type="PATRIC" id="fig|1411691.4.peg.1688"/>
<dbReference type="EchoBASE" id="EB0289"/>
<dbReference type="eggNOG" id="COG4771">
    <property type="taxonomic scope" value="Bacteria"/>
</dbReference>
<dbReference type="HOGENOM" id="CLU_008287_18_2_6"/>
<dbReference type="InParanoid" id="P05825"/>
<dbReference type="OMA" id="WDFAPMQ"/>
<dbReference type="OrthoDB" id="9764669at2"/>
<dbReference type="PhylomeDB" id="P05825"/>
<dbReference type="BioCyc" id="EcoCyc:EG10293-MONOMER"/>
<dbReference type="BioCyc" id="MetaCyc:EG10293-MONOMER"/>
<dbReference type="EvolutionaryTrace" id="P05825"/>
<dbReference type="PRO" id="PR:P05825"/>
<dbReference type="Proteomes" id="UP000000625">
    <property type="component" value="Chromosome"/>
</dbReference>
<dbReference type="GO" id="GO:0030313">
    <property type="term" value="C:cell envelope"/>
    <property type="evidence" value="ECO:0000314"/>
    <property type="project" value="CACAO"/>
</dbReference>
<dbReference type="GO" id="GO:0009279">
    <property type="term" value="C:cell outer membrane"/>
    <property type="evidence" value="ECO:0000314"/>
    <property type="project" value="EcoCyc"/>
</dbReference>
<dbReference type="GO" id="GO:0016020">
    <property type="term" value="C:membrane"/>
    <property type="evidence" value="ECO:0000303"/>
    <property type="project" value="ComplexPortal"/>
</dbReference>
<dbReference type="GO" id="GO:1902495">
    <property type="term" value="C:transmembrane transporter complex"/>
    <property type="evidence" value="ECO:0000303"/>
    <property type="project" value="ComplexPortal"/>
</dbReference>
<dbReference type="GO" id="GO:0042912">
    <property type="term" value="F:colicin transmembrane transporter activity"/>
    <property type="evidence" value="ECO:0000314"/>
    <property type="project" value="EcoCyc"/>
</dbReference>
<dbReference type="GO" id="GO:1903981">
    <property type="term" value="F:enterobactin binding"/>
    <property type="evidence" value="ECO:0000314"/>
    <property type="project" value="UniProtKB"/>
</dbReference>
<dbReference type="GO" id="GO:0042931">
    <property type="term" value="F:enterobactin transmembrane transporter activity"/>
    <property type="evidence" value="ECO:0000318"/>
    <property type="project" value="GO_Central"/>
</dbReference>
<dbReference type="GO" id="GO:0015620">
    <property type="term" value="F:ferric-enterobactin transmembrane transporter activity"/>
    <property type="evidence" value="ECO:0000314"/>
    <property type="project" value="EcoCyc"/>
</dbReference>
<dbReference type="GO" id="GO:0022834">
    <property type="term" value="F:ligand-gated channel activity"/>
    <property type="evidence" value="ECO:0000315"/>
    <property type="project" value="EcoCyc"/>
</dbReference>
<dbReference type="GO" id="GO:0019904">
    <property type="term" value="F:protein domain specific binding"/>
    <property type="evidence" value="ECO:0000353"/>
    <property type="project" value="CAFA"/>
</dbReference>
<dbReference type="GO" id="GO:0015344">
    <property type="term" value="F:siderophore uptake transmembrane transporter activity"/>
    <property type="evidence" value="ECO:0000318"/>
    <property type="project" value="GO_Central"/>
</dbReference>
<dbReference type="GO" id="GO:0038023">
    <property type="term" value="F:signaling receptor activity"/>
    <property type="evidence" value="ECO:0007669"/>
    <property type="project" value="InterPro"/>
</dbReference>
<dbReference type="GO" id="GO:0042914">
    <property type="term" value="P:colicin transport"/>
    <property type="evidence" value="ECO:0000314"/>
    <property type="project" value="EcoCyc"/>
</dbReference>
<dbReference type="GO" id="GO:0042930">
    <property type="term" value="P:enterobactin transport"/>
    <property type="evidence" value="ECO:0000318"/>
    <property type="project" value="GO_Central"/>
</dbReference>
<dbReference type="GO" id="GO:0015685">
    <property type="term" value="P:ferric-enterobactin import into cell"/>
    <property type="evidence" value="ECO:0000314"/>
    <property type="project" value="EcoCyc"/>
</dbReference>
<dbReference type="GO" id="GO:0006879">
    <property type="term" value="P:intracellular iron ion homeostasis"/>
    <property type="evidence" value="ECO:0000303"/>
    <property type="project" value="ComplexPortal"/>
</dbReference>
<dbReference type="GO" id="GO:0044718">
    <property type="term" value="P:siderophore transmembrane transport"/>
    <property type="evidence" value="ECO:0000318"/>
    <property type="project" value="GO_Central"/>
</dbReference>
<dbReference type="GO" id="GO:0033214">
    <property type="term" value="P:siderophore-dependent iron import into cell"/>
    <property type="evidence" value="ECO:0000315"/>
    <property type="project" value="EcoCyc"/>
</dbReference>
<dbReference type="CDD" id="cd01347">
    <property type="entry name" value="ligand_gated_channel"/>
    <property type="match status" value="1"/>
</dbReference>
<dbReference type="FunFam" id="2.40.170.20:FF:000002">
    <property type="entry name" value="Colicin I TonB-dependent receptor"/>
    <property type="match status" value="1"/>
</dbReference>
<dbReference type="FunFam" id="2.170.130.10:FF:000005">
    <property type="entry name" value="Ferrienterobactin outer membrane receptor"/>
    <property type="match status" value="1"/>
</dbReference>
<dbReference type="Gene3D" id="2.40.170.20">
    <property type="entry name" value="TonB-dependent receptor, beta-barrel domain"/>
    <property type="match status" value="1"/>
</dbReference>
<dbReference type="Gene3D" id="2.170.130.10">
    <property type="entry name" value="TonB-dependent receptor, plug domain"/>
    <property type="match status" value="1"/>
</dbReference>
<dbReference type="InterPro" id="IPR012910">
    <property type="entry name" value="Plug_dom"/>
</dbReference>
<dbReference type="InterPro" id="IPR037066">
    <property type="entry name" value="Plug_dom_sf"/>
</dbReference>
<dbReference type="InterPro" id="IPR039426">
    <property type="entry name" value="TonB-dep_rcpt-like"/>
</dbReference>
<dbReference type="InterPro" id="IPR000531">
    <property type="entry name" value="TonB-dep_rcpt_b-brl"/>
</dbReference>
<dbReference type="InterPro" id="IPR010916">
    <property type="entry name" value="TonB_box_CS"/>
</dbReference>
<dbReference type="InterPro" id="IPR036942">
    <property type="entry name" value="TonB_rcpt_b-brl_sf"/>
</dbReference>
<dbReference type="InterPro" id="IPR010917">
    <property type="entry name" value="TonB_rcpt_CS"/>
</dbReference>
<dbReference type="InterPro" id="IPR010105">
    <property type="entry name" value="TonB_sidphr_rcpt"/>
</dbReference>
<dbReference type="NCBIfam" id="NF010048">
    <property type="entry name" value="PRK13524.1"/>
    <property type="match status" value="1"/>
</dbReference>
<dbReference type="NCBIfam" id="NF010051">
    <property type="entry name" value="PRK13528.1"/>
    <property type="match status" value="1"/>
</dbReference>
<dbReference type="NCBIfam" id="TIGR01783">
    <property type="entry name" value="TonB-siderophor"/>
    <property type="match status" value="1"/>
</dbReference>
<dbReference type="PANTHER" id="PTHR30069:SF51">
    <property type="entry name" value="FERRIENTEROBACTIN RECEPTOR"/>
    <property type="match status" value="1"/>
</dbReference>
<dbReference type="PANTHER" id="PTHR30069">
    <property type="entry name" value="TONB-DEPENDENT OUTER MEMBRANE RECEPTOR"/>
    <property type="match status" value="1"/>
</dbReference>
<dbReference type="Pfam" id="PF07715">
    <property type="entry name" value="Plug"/>
    <property type="match status" value="1"/>
</dbReference>
<dbReference type="Pfam" id="PF00593">
    <property type="entry name" value="TonB_dep_Rec_b-barrel"/>
    <property type="match status" value="1"/>
</dbReference>
<dbReference type="SUPFAM" id="SSF56935">
    <property type="entry name" value="Porins"/>
    <property type="match status" value="1"/>
</dbReference>
<dbReference type="PROSITE" id="PS00430">
    <property type="entry name" value="TONB_DEPENDENT_REC_1"/>
    <property type="match status" value="1"/>
</dbReference>
<dbReference type="PROSITE" id="PS01156">
    <property type="entry name" value="TONB_DEPENDENT_REC_2"/>
    <property type="match status" value="1"/>
</dbReference>
<dbReference type="PROSITE" id="PS52016">
    <property type="entry name" value="TONB_DEPENDENT_REC_3"/>
    <property type="match status" value="1"/>
</dbReference>
<keyword id="KW-0002">3D-structure</keyword>
<keyword id="KW-0998">Cell outer membrane</keyword>
<keyword id="KW-0406">Ion transport</keyword>
<keyword id="KW-0408">Iron</keyword>
<keyword id="KW-0410">Iron transport</keyword>
<keyword id="KW-0472">Membrane</keyword>
<keyword id="KW-0675">Receptor</keyword>
<keyword id="KW-1185">Reference proteome</keyword>
<keyword id="KW-0732">Signal</keyword>
<keyword id="KW-0798">TonB box</keyword>
<keyword id="KW-0812">Transmembrane</keyword>
<keyword id="KW-1134">Transmembrane beta strand</keyword>
<keyword id="KW-0813">Transport</keyword>
<reference key="1">
    <citation type="journal article" date="1986" name="J. Biol. Chem.">
        <title>Nucleotide sequence of the gene for the ferrienterochelin receptor FepA in Escherichia coli. Homology among outer membrane receptors that interact with TonB.</title>
        <authorList>
            <person name="Lundrigan M.D."/>
            <person name="Kadner R.J."/>
        </authorList>
    </citation>
    <scope>NUCLEOTIDE SEQUENCE [GENOMIC DNA]</scope>
</reference>
<reference key="2">
    <citation type="journal article" date="1996" name="DNA Res.">
        <title>A 718-kb DNA sequence of the Escherichia coli K-12 genome corresponding to the 12.7-28.0 min region on the linkage map.</title>
        <authorList>
            <person name="Oshima T."/>
            <person name="Aiba H."/>
            <person name="Baba T."/>
            <person name="Fujita K."/>
            <person name="Hayashi K."/>
            <person name="Honjo A."/>
            <person name="Ikemoto K."/>
            <person name="Inada T."/>
            <person name="Itoh T."/>
            <person name="Kajihara M."/>
            <person name="Kanai K."/>
            <person name="Kashimoto K."/>
            <person name="Kimura S."/>
            <person name="Kitagawa M."/>
            <person name="Makino K."/>
            <person name="Masuda S."/>
            <person name="Miki T."/>
            <person name="Mizobuchi K."/>
            <person name="Mori H."/>
            <person name="Motomura K."/>
            <person name="Nakamura Y."/>
            <person name="Nashimoto H."/>
            <person name="Nishio Y."/>
            <person name="Saito N."/>
            <person name="Sampei G."/>
            <person name="Seki Y."/>
            <person name="Tagami H."/>
            <person name="Takemoto K."/>
            <person name="Wada C."/>
            <person name="Yamamoto Y."/>
            <person name="Yano M."/>
            <person name="Horiuchi T."/>
        </authorList>
    </citation>
    <scope>NUCLEOTIDE SEQUENCE [LARGE SCALE GENOMIC DNA]</scope>
    <source>
        <strain>K12 / W3110 / ATCC 27325 / DSM 5911</strain>
    </source>
</reference>
<reference key="3">
    <citation type="submission" date="1997-01" db="EMBL/GenBank/DDBJ databases">
        <title>Sequence of minutes 4-25 of Escherichia coli.</title>
        <authorList>
            <person name="Chung E."/>
            <person name="Allen E."/>
            <person name="Araujo R."/>
            <person name="Aparicio A.M."/>
            <person name="Davis K."/>
            <person name="Duncan M."/>
            <person name="Federspiel N."/>
            <person name="Hyman R."/>
            <person name="Kalman S."/>
            <person name="Komp C."/>
            <person name="Kurdi O."/>
            <person name="Lew H."/>
            <person name="Lin D."/>
            <person name="Namath A."/>
            <person name="Oefner P."/>
            <person name="Roberts D."/>
            <person name="Schramm S."/>
            <person name="Davis R.W."/>
        </authorList>
    </citation>
    <scope>NUCLEOTIDE SEQUENCE [LARGE SCALE GENOMIC DNA]</scope>
    <source>
        <strain>K12 / MG1655 / ATCC 47076</strain>
    </source>
</reference>
<reference key="4">
    <citation type="journal article" date="1997" name="Science">
        <title>The complete genome sequence of Escherichia coli K-12.</title>
        <authorList>
            <person name="Blattner F.R."/>
            <person name="Plunkett G. III"/>
            <person name="Bloch C.A."/>
            <person name="Perna N.T."/>
            <person name="Burland V."/>
            <person name="Riley M."/>
            <person name="Collado-Vides J."/>
            <person name="Glasner J.D."/>
            <person name="Rode C.K."/>
            <person name="Mayhew G.F."/>
            <person name="Gregor J."/>
            <person name="Davis N.W."/>
            <person name="Kirkpatrick H.A."/>
            <person name="Goeden M.A."/>
            <person name="Rose D.J."/>
            <person name="Mau B."/>
            <person name="Shao Y."/>
        </authorList>
    </citation>
    <scope>NUCLEOTIDE SEQUENCE [LARGE SCALE GENOMIC DNA]</scope>
    <source>
        <strain>K12 / MG1655 / ATCC 47076</strain>
    </source>
</reference>
<reference key="5">
    <citation type="journal article" date="2006" name="Mol. Syst. Biol.">
        <title>Highly accurate genome sequences of Escherichia coli K-12 strains MG1655 and W3110.</title>
        <authorList>
            <person name="Hayashi K."/>
            <person name="Morooka N."/>
            <person name="Yamamoto Y."/>
            <person name="Fujita K."/>
            <person name="Isono K."/>
            <person name="Choi S."/>
            <person name="Ohtsubo E."/>
            <person name="Baba T."/>
            <person name="Wanner B.L."/>
            <person name="Mori H."/>
            <person name="Horiuchi T."/>
        </authorList>
    </citation>
    <scope>NUCLEOTIDE SEQUENCE [LARGE SCALE GENOMIC DNA]</scope>
    <source>
        <strain>K12 / W3110 / ATCC 27325 / DSM 5911</strain>
    </source>
</reference>
<reference key="6">
    <citation type="journal article" date="1988" name="J. Biol. Chem.">
        <title>Transcriptional mapping and nucleotide sequence of the Escherichia coli fepA-fes enterobactin region. Identification of a unique iron-regulated bidirectional promoter.</title>
        <authorList>
            <person name="Pettis G.S."/>
            <person name="Brickman T.J."/>
            <person name="McIntosh M.A."/>
        </authorList>
    </citation>
    <scope>NUCLEOTIDE SEQUENCE [GENOMIC DNA] OF 1-77</scope>
</reference>
<reference key="7">
    <citation type="journal article" date="1989" name="Mol. Microbiol.">
        <title>The Escherichia coli enterobactin biosynthesis gene, entD: nucleotide sequence and membrane localization of its protein product.</title>
        <authorList>
            <person name="Armstrong S.K."/>
            <person name="Pettis G.S."/>
            <person name="Forrester L.J."/>
            <person name="McIntosh M.A."/>
        </authorList>
    </citation>
    <scope>NUCLEOTIDE SEQUENCE [GENOMIC DNA] OF 735-746</scope>
</reference>
<reference key="8">
    <citation type="journal article" date="1990" name="J. Biol. Chem.">
        <title>Molecular analysis of the Escherichia coli ferric enterobactin receptor FepA.</title>
        <authorList>
            <person name="Armstrong S.K."/>
            <person name="Francis C.L."/>
            <person name="McIntosh M.A."/>
        </authorList>
    </citation>
    <scope>MOLECULAR ANALYSIS</scope>
</reference>
<reference key="9">
    <citation type="journal article" date="1997" name="Electrophoresis">
        <title>Escherichia coli proteome analysis using the gene-protein database.</title>
        <authorList>
            <person name="VanBogelen R.A."/>
            <person name="Abshire K.Z."/>
            <person name="Moldover B."/>
            <person name="Olson E.R."/>
            <person name="Neidhardt F.C."/>
        </authorList>
    </citation>
    <scope>IDENTIFICATION BY 2D-GEL</scope>
</reference>
<reference key="10">
    <citation type="journal article" date="2009" name="Mol. Cell">
        <title>Hydroxyurea induces hydroxyl radical-mediated cell death in Escherichia coli.</title>
        <authorList>
            <person name="Davies B.W."/>
            <person name="Kohanski M.A."/>
            <person name="Simmons L.A."/>
            <person name="Winkler J.A."/>
            <person name="Collins J.J."/>
            <person name="Walker G.C."/>
        </authorList>
    </citation>
    <scope>INDUCTION BY HYDROXYUREA</scope>
    <source>
        <strain>K12 / MC4100 / ATCC 35695 / DSM 6574</strain>
    </source>
</reference>
<reference key="11">
    <citation type="journal article" date="1999" name="Nat. Struct. Biol.">
        <title>Crystal structure of the outer membrane active transporter FepA from Escherichia coli.</title>
        <authorList>
            <person name="Buchanan S.K."/>
            <person name="Smith B.S."/>
            <person name="Venkatramani L."/>
            <person name="Xia D."/>
            <person name="Esser L."/>
            <person name="Palnitkar M."/>
            <person name="Chakraborty R."/>
            <person name="van der Helm D."/>
            <person name="Deisenhofer J."/>
        </authorList>
    </citation>
    <scope>X-RAY CRYSTALLOGRAPHY (2.4 ANGSTROMS)</scope>
</reference>
<organism>
    <name type="scientific">Escherichia coli (strain K12)</name>
    <dbReference type="NCBI Taxonomy" id="83333"/>
    <lineage>
        <taxon>Bacteria</taxon>
        <taxon>Pseudomonadati</taxon>
        <taxon>Pseudomonadota</taxon>
        <taxon>Gammaproteobacteria</taxon>
        <taxon>Enterobacterales</taxon>
        <taxon>Enterobacteriaceae</taxon>
        <taxon>Escherichia</taxon>
    </lineage>
</organism>
<accession>P05825</accession>
<accession>P75722</accession>
<accession>P76821</accession>
<accession>P77093</accession>
<protein>
    <recommendedName>
        <fullName>Ferrienterobactin receptor</fullName>
    </recommendedName>
    <alternativeName>
        <fullName>Enterobactin outer-membrane receptor</fullName>
    </alternativeName>
</protein>
<name>FEPA_ECOLI</name>
<evidence type="ECO:0000255" key="1">
    <source>
        <dbReference type="PROSITE-ProRule" id="PRU01360"/>
    </source>
</evidence>
<evidence type="ECO:0000256" key="2">
    <source>
        <dbReference type="SAM" id="MobiDB-lite"/>
    </source>
</evidence>
<evidence type="ECO:0000269" key="3">
    <source>
    </source>
</evidence>
<evidence type="ECO:0000305" key="4"/>
<evidence type="ECO:0007829" key="5">
    <source>
        <dbReference type="PDB" id="1FEP"/>
    </source>
</evidence>